<name>PSAB_PROHO</name>
<gene>
    <name type="primary">psaB</name>
</gene>
<dbReference type="EC" id="1.97.1.12"/>
<dbReference type="EMBL" id="AY026898">
    <property type="protein sequence ID" value="AAK08971.1"/>
    <property type="molecule type" value="Genomic_DNA"/>
</dbReference>
<dbReference type="SMR" id="P58387"/>
<dbReference type="GO" id="GO:0009522">
    <property type="term" value="C:photosystem I"/>
    <property type="evidence" value="ECO:0007669"/>
    <property type="project" value="UniProtKB-KW"/>
</dbReference>
<dbReference type="GO" id="GO:0031676">
    <property type="term" value="C:plasma membrane-derived thylakoid membrane"/>
    <property type="evidence" value="ECO:0007669"/>
    <property type="project" value="UniProtKB-SubCell"/>
</dbReference>
<dbReference type="GO" id="GO:0051539">
    <property type="term" value="F:4 iron, 4 sulfur cluster binding"/>
    <property type="evidence" value="ECO:0007669"/>
    <property type="project" value="UniProtKB-KW"/>
</dbReference>
<dbReference type="GO" id="GO:0016168">
    <property type="term" value="F:chlorophyll binding"/>
    <property type="evidence" value="ECO:0007669"/>
    <property type="project" value="UniProtKB-KW"/>
</dbReference>
<dbReference type="GO" id="GO:0046872">
    <property type="term" value="F:metal ion binding"/>
    <property type="evidence" value="ECO:0007669"/>
    <property type="project" value="UniProtKB-KW"/>
</dbReference>
<dbReference type="GO" id="GO:0016491">
    <property type="term" value="F:oxidoreductase activity"/>
    <property type="evidence" value="ECO:0007669"/>
    <property type="project" value="UniProtKB-KW"/>
</dbReference>
<dbReference type="GO" id="GO:0015979">
    <property type="term" value="P:photosynthesis"/>
    <property type="evidence" value="ECO:0007669"/>
    <property type="project" value="UniProtKB-KW"/>
</dbReference>
<dbReference type="Gene3D" id="1.20.1130.10">
    <property type="entry name" value="Photosystem I PsaA/PsaB"/>
    <property type="match status" value="1"/>
</dbReference>
<dbReference type="InterPro" id="IPR001280">
    <property type="entry name" value="PSI_PsaA/B"/>
</dbReference>
<dbReference type="InterPro" id="IPR020586">
    <property type="entry name" value="PSI_PsaA/B_CS"/>
</dbReference>
<dbReference type="InterPro" id="IPR036408">
    <property type="entry name" value="PSI_PsaA/B_sf"/>
</dbReference>
<dbReference type="InterPro" id="IPR006244">
    <property type="entry name" value="PSI_PsaB"/>
</dbReference>
<dbReference type="NCBIfam" id="TIGR01336">
    <property type="entry name" value="psaB"/>
    <property type="match status" value="1"/>
</dbReference>
<dbReference type="PANTHER" id="PTHR30128">
    <property type="entry name" value="OUTER MEMBRANE PROTEIN, OMPA-RELATED"/>
    <property type="match status" value="1"/>
</dbReference>
<dbReference type="PANTHER" id="PTHR30128:SF19">
    <property type="entry name" value="PHOTOSYSTEM I P700 CHLOROPHYLL A APOPROTEIN A1-RELATED"/>
    <property type="match status" value="1"/>
</dbReference>
<dbReference type="Pfam" id="PF00223">
    <property type="entry name" value="PsaA_PsaB"/>
    <property type="match status" value="1"/>
</dbReference>
<dbReference type="PRINTS" id="PR00257">
    <property type="entry name" value="PHOTSYSPSAAB"/>
</dbReference>
<dbReference type="SUPFAM" id="SSF81558">
    <property type="entry name" value="Photosystem I subunits PsaA/PsaB"/>
    <property type="match status" value="1"/>
</dbReference>
<dbReference type="PROSITE" id="PS00419">
    <property type="entry name" value="PHOTOSYSTEM_I_PSAAB"/>
    <property type="match status" value="1"/>
</dbReference>
<comment type="function">
    <text evidence="1">PsaA and PsaB bind P700, the primary electron donor of photosystem I (PSI), as well as the electron acceptors A0, A1 and FX. PSI is a plastocyanin/cytochrome c6-ferredoxin oxidoreductase, converting photonic excitation into a charge separation, which transfers an electron from the donor P700 chlorophyll pair to the spectroscopically characterized acceptors A0, A1, FX, FA and FB in turn. Oxidized P700 is reduced on the lumenal side of the thylakoid membrane by plastocyanin or cytochrome c6 (By similarity).</text>
</comment>
<comment type="catalytic activity">
    <reaction>
        <text>reduced [plastocyanin] + hnu + oxidized [2Fe-2S]-[ferredoxin] = oxidized [plastocyanin] + reduced [2Fe-2S]-[ferredoxin]</text>
        <dbReference type="Rhea" id="RHEA:30407"/>
        <dbReference type="Rhea" id="RHEA-COMP:10000"/>
        <dbReference type="Rhea" id="RHEA-COMP:10001"/>
        <dbReference type="Rhea" id="RHEA-COMP:10039"/>
        <dbReference type="Rhea" id="RHEA-COMP:10040"/>
        <dbReference type="ChEBI" id="CHEBI:29036"/>
        <dbReference type="ChEBI" id="CHEBI:30212"/>
        <dbReference type="ChEBI" id="CHEBI:33737"/>
        <dbReference type="ChEBI" id="CHEBI:33738"/>
        <dbReference type="ChEBI" id="CHEBI:49552"/>
        <dbReference type="EC" id="1.97.1.12"/>
    </reaction>
</comment>
<comment type="cofactor">
    <text evidence="1">PSI electron transfer chain: 5 chlorophyll a, 1 chlorophyll a', 2 phylloquinones and 3 4Fe-4S clusters. PSI core antenna: 90 chlorophyll a, 22 carotenoids, 3 phospholipids and 1 galactolipid. P700 is a chlorophyll a/chlorophyll a' dimer, A0 is one or more chlorophyll a, A1 is one or both phylloquinones and FX is a shared 4Fe-4S iron-sulfur center.</text>
</comment>
<comment type="subunit">
    <text evidence="1">The PsaA/B heterodimer binds the P700 chlorophyll special pair and subsequent electron acceptors. PSI consists of a core antenna complex that captures photons, and an electron transfer chain that converts photonic excitation into a charge separation. The cyanobacterial PSI reaction center is composed of one copy each of PsaA,B,C,D,E,F,I,J,K,L,M and X, and forms trimeric complexes (By similarity).</text>
</comment>
<comment type="subcellular location">
    <subcellularLocation>
        <location evidence="1">Cellular thylakoid membrane</location>
        <topology evidence="1">Multi-pass membrane protein</topology>
    </subcellularLocation>
</comment>
<comment type="similarity">
    <text evidence="3">Belongs to the PsaA/PsaB family.</text>
</comment>
<accession>P58387</accession>
<accession>Q9AL92</accession>
<reference key="1">
    <citation type="submission" date="2001-02" db="EMBL/GenBank/DDBJ databases">
        <title>Structural variability in the psaA/psaB proteins of Prochlorothrix.</title>
        <authorList>
            <person name="Mychkine E."/>
            <person name="Bullerjahn G.S."/>
        </authorList>
    </citation>
    <scope>NUCLEOTIDE SEQUENCE [GENOMIC DNA]</scope>
</reference>
<proteinExistence type="inferred from homology"/>
<feature type="chain" id="PRO_0000088646" description="Photosystem I P700 chlorophyll a apoprotein A2">
    <location>
        <begin position="1"/>
        <end position="661" status="greater than"/>
    </location>
</feature>
<feature type="transmembrane region" description="Helical; Name=I" evidence="2">
    <location>
        <begin position="46"/>
        <end position="69"/>
    </location>
</feature>
<feature type="transmembrane region" description="Helical; Name=II" evidence="2">
    <location>
        <begin position="135"/>
        <end position="158"/>
    </location>
</feature>
<feature type="transmembrane region" description="Helical; Name=III" evidence="2">
    <location>
        <begin position="175"/>
        <end position="199"/>
    </location>
</feature>
<feature type="transmembrane region" description="Helical; Name=IV" evidence="2">
    <location>
        <begin position="273"/>
        <end position="291"/>
    </location>
</feature>
<feature type="transmembrane region" description="Helical; Name=V" evidence="2">
    <location>
        <begin position="335"/>
        <end position="358"/>
    </location>
</feature>
<feature type="transmembrane region" description="Helical; Name=VI" evidence="2">
    <location>
        <begin position="374"/>
        <end position="400"/>
    </location>
</feature>
<feature type="transmembrane region" description="Helical; Name=VII" evidence="2">
    <location>
        <begin position="422"/>
        <end position="443"/>
    </location>
</feature>
<feature type="transmembrane region" description="Helical; Name=VIII" evidence="2">
    <location>
        <begin position="522"/>
        <end position="540"/>
    </location>
</feature>
<feature type="transmembrane region" description="Helical; Name=IX" evidence="2">
    <location>
        <begin position="580"/>
        <end position="601"/>
    </location>
</feature>
<feature type="transmembrane region" description="Helical; Name=X" evidence="2">
    <location>
        <begin position="648"/>
        <end position="661" status="greater than"/>
    </location>
</feature>
<feature type="binding site" evidence="1">
    <location>
        <position position="564"/>
    </location>
    <ligand>
        <name>[4Fe-4S] cluster</name>
        <dbReference type="ChEBI" id="CHEBI:49883"/>
        <note>ligand shared between dimeric partners</note>
    </ligand>
</feature>
<feature type="binding site" evidence="1">
    <location>
        <position position="573"/>
    </location>
    <ligand>
        <name>[4Fe-4S] cluster</name>
        <dbReference type="ChEBI" id="CHEBI:49883"/>
        <note>ligand shared between dimeric partners</note>
    </ligand>
</feature>
<feature type="binding site" description="axial binding residue" evidence="1">
    <location>
        <position position="659"/>
    </location>
    <ligand>
        <name>chlorophyll a</name>
        <dbReference type="ChEBI" id="CHEBI:58416"/>
        <label>B1</label>
    </ligand>
    <ligandPart>
        <name>Mg</name>
        <dbReference type="ChEBI" id="CHEBI:25107"/>
    </ligandPart>
</feature>
<feature type="non-terminal residue">
    <location>
        <position position="661"/>
    </location>
</feature>
<sequence length="661" mass="73328">MATKFPKFSQDLAQDPTTRRIWYGIATAHDFEMHDGMTEENLYQKIFASHFGHLAIIFLWTSGNLFHVAWQGNFAQWVADPLNTRPIAHAIWDPHFGEAAIEAFTQSDASCAVNIAYSGVYHWWYTIGMRTAADLYQGSIFLMVLAALMLFAGWLHLQPKFRPSLAWFKNAESRLNHHLAGLFGVSSLAWAGHLIHVAIPASRGETVNWGNFMSTPPHPAGLAPFFSGNWSVYAANPDTTGHVFNTSEGAGTAILTFLGGFHPQTQAMWLTDIAHHHLAIAVIFIIAGHMYKTNFGIGHSMKEILKTHRSPEGTPFGGMLGAGHDGLYDTINNSLHFQLGLALAALGVVTSLVAQHMYSMPSYAFIAQDFTTQAALYVHHQYIAIFLMCGAFAHGAIFFVRDYDHEANKNNVLGRVLEHKEAIISHLSWVSLFLGFHTLALVHNDVVVAFATPEKQILLEPVFAQFVQAASGKALYGFNVLLVNPDSAASIASDYIAGPHFWLDAINSGVNSLFLTIGPGDFLVHHAIALGLHTTTLILVKGALDARGSKLMPDKKDFGYSFPCDGPGRGGTCDISAWDSFYLAVFWALNTAGWLTFYWHWKHLSIWQDNVAQFNESSTYLMGWFRDYLWLNSAQLINGYNPFGSQQLAVWAWMFLFGHLV</sequence>
<evidence type="ECO:0000250" key="1"/>
<evidence type="ECO:0000255" key="2"/>
<evidence type="ECO:0000305" key="3"/>
<organism>
    <name type="scientific">Prochlorothrix hollandica</name>
    <dbReference type="NCBI Taxonomy" id="1223"/>
    <lineage>
        <taxon>Bacteria</taxon>
        <taxon>Bacillati</taxon>
        <taxon>Cyanobacteriota</taxon>
        <taxon>Cyanophyceae</taxon>
        <taxon>Prochlorotrichales</taxon>
        <taxon>Prochlorotrichaceae</taxon>
        <taxon>Prochlorothrix</taxon>
    </lineage>
</organism>
<keyword id="KW-0004">4Fe-4S</keyword>
<keyword id="KW-0148">Chlorophyll</keyword>
<keyword id="KW-0157">Chromophore</keyword>
<keyword id="KW-0249">Electron transport</keyword>
<keyword id="KW-0408">Iron</keyword>
<keyword id="KW-0411">Iron-sulfur</keyword>
<keyword id="KW-0460">Magnesium</keyword>
<keyword id="KW-0472">Membrane</keyword>
<keyword id="KW-0479">Metal-binding</keyword>
<keyword id="KW-0560">Oxidoreductase</keyword>
<keyword id="KW-0602">Photosynthesis</keyword>
<keyword id="KW-0603">Photosystem I</keyword>
<keyword id="KW-0793">Thylakoid</keyword>
<keyword id="KW-0812">Transmembrane</keyword>
<keyword id="KW-1133">Transmembrane helix</keyword>
<keyword id="KW-0813">Transport</keyword>
<protein>
    <recommendedName>
        <fullName>Photosystem I P700 chlorophyll a apoprotein A2</fullName>
        <ecNumber>1.97.1.12</ecNumber>
    </recommendedName>
    <alternativeName>
        <fullName>PsaB</fullName>
    </alternativeName>
</protein>